<dbReference type="EMBL" id="CP000653">
    <property type="protein sequence ID" value="ABP58704.1"/>
    <property type="molecule type" value="Genomic_DNA"/>
</dbReference>
<dbReference type="RefSeq" id="WP_011915282.1">
    <property type="nucleotide sequence ID" value="NC_009436.1"/>
</dbReference>
<dbReference type="SMR" id="A4W4S4"/>
<dbReference type="STRING" id="399742.Ent638_0014"/>
<dbReference type="KEGG" id="ent:Ent638_0014"/>
<dbReference type="eggNOG" id="COG0071">
    <property type="taxonomic scope" value="Bacteria"/>
</dbReference>
<dbReference type="HOGENOM" id="CLU_046737_4_2_6"/>
<dbReference type="OrthoDB" id="6871152at2"/>
<dbReference type="Proteomes" id="UP000000230">
    <property type="component" value="Chromosome"/>
</dbReference>
<dbReference type="GO" id="GO:0005737">
    <property type="term" value="C:cytoplasm"/>
    <property type="evidence" value="ECO:0007669"/>
    <property type="project" value="UniProtKB-SubCell"/>
</dbReference>
<dbReference type="GO" id="GO:0050821">
    <property type="term" value="P:protein stabilization"/>
    <property type="evidence" value="ECO:0007669"/>
    <property type="project" value="UniProtKB-UniRule"/>
</dbReference>
<dbReference type="CDD" id="cd06470">
    <property type="entry name" value="ACD_IbpA-B_like"/>
    <property type="match status" value="1"/>
</dbReference>
<dbReference type="Gene3D" id="2.60.40.790">
    <property type="match status" value="1"/>
</dbReference>
<dbReference type="HAMAP" id="MF_02001">
    <property type="entry name" value="HSP20_IbpB"/>
    <property type="match status" value="1"/>
</dbReference>
<dbReference type="InterPro" id="IPR002068">
    <property type="entry name" value="A-crystallin/Hsp20_dom"/>
</dbReference>
<dbReference type="InterPro" id="IPR037913">
    <property type="entry name" value="ACD_IbpA/B"/>
</dbReference>
<dbReference type="InterPro" id="IPR008978">
    <property type="entry name" value="HSP20-like_chaperone"/>
</dbReference>
<dbReference type="InterPro" id="IPR022848">
    <property type="entry name" value="HSP20_IbpB"/>
</dbReference>
<dbReference type="NCBIfam" id="NF008618">
    <property type="entry name" value="PRK11597.1"/>
    <property type="match status" value="1"/>
</dbReference>
<dbReference type="PANTHER" id="PTHR47062">
    <property type="match status" value="1"/>
</dbReference>
<dbReference type="PANTHER" id="PTHR47062:SF2">
    <property type="entry name" value="SMALL HEAT SHOCK PROTEIN IBPB"/>
    <property type="match status" value="1"/>
</dbReference>
<dbReference type="Pfam" id="PF00011">
    <property type="entry name" value="HSP20"/>
    <property type="match status" value="1"/>
</dbReference>
<dbReference type="SUPFAM" id="SSF49764">
    <property type="entry name" value="HSP20-like chaperones"/>
    <property type="match status" value="1"/>
</dbReference>
<dbReference type="PROSITE" id="PS01031">
    <property type="entry name" value="SHSP"/>
    <property type="match status" value="1"/>
</dbReference>
<gene>
    <name evidence="1" type="primary">ibpB</name>
    <name type="ordered locus">Ent638_0014</name>
</gene>
<evidence type="ECO:0000255" key="1">
    <source>
        <dbReference type="HAMAP-Rule" id="MF_02001"/>
    </source>
</evidence>
<evidence type="ECO:0000255" key="2">
    <source>
        <dbReference type="PROSITE-ProRule" id="PRU00285"/>
    </source>
</evidence>
<name>IBPB_ENT38</name>
<reference key="1">
    <citation type="journal article" date="2010" name="PLoS Genet.">
        <title>Genome sequence of the plant growth promoting endophytic bacterium Enterobacter sp. 638.</title>
        <authorList>
            <person name="Taghavi S."/>
            <person name="van der Lelie D."/>
            <person name="Hoffman A."/>
            <person name="Zhang Y.B."/>
            <person name="Walla M.D."/>
            <person name="Vangronsveld J."/>
            <person name="Newman L."/>
            <person name="Monchy S."/>
        </authorList>
    </citation>
    <scope>NUCLEOTIDE SEQUENCE [LARGE SCALE GENOMIC DNA]</scope>
    <source>
        <strain>638</strain>
    </source>
</reference>
<keyword id="KW-0143">Chaperone</keyword>
<keyword id="KW-0963">Cytoplasm</keyword>
<keyword id="KW-0346">Stress response</keyword>
<accession>A4W4S4</accession>
<proteinExistence type="inferred from homology"/>
<feature type="chain" id="PRO_1000070882" description="Small heat shock protein IbpB">
    <location>
        <begin position="1"/>
        <end position="142"/>
    </location>
</feature>
<feature type="domain" description="sHSP" evidence="2">
    <location>
        <begin position="26"/>
        <end position="137"/>
    </location>
</feature>
<organism>
    <name type="scientific">Enterobacter sp. (strain 638)</name>
    <dbReference type="NCBI Taxonomy" id="399742"/>
    <lineage>
        <taxon>Bacteria</taxon>
        <taxon>Pseudomonadati</taxon>
        <taxon>Pseudomonadota</taxon>
        <taxon>Gammaproteobacteria</taxon>
        <taxon>Enterobacterales</taxon>
        <taxon>Enterobacteriaceae</taxon>
        <taxon>Enterobacter</taxon>
    </lineage>
</organism>
<protein>
    <recommendedName>
        <fullName evidence="1">Small heat shock protein IbpB</fullName>
    </recommendedName>
    <alternativeName>
        <fullName evidence="1">16 kDa heat shock protein B</fullName>
    </alternativeName>
</protein>
<comment type="function">
    <text evidence="1">Associates with aggregated proteins, together with IbpA, to stabilize and protect them from irreversible denaturation and extensive proteolysis during heat shock and oxidative stress. Aggregated proteins bound to the IbpAB complex are more efficiently refolded and reactivated by the ATP-dependent chaperone systems ClpB and DnaK/DnaJ/GrpE. Its activity is ATP-independent.</text>
</comment>
<comment type="subunit">
    <text evidence="1">Homodimer. Forms homomultimers of about 100-150 subunits at optimal growth temperatures. Conformation changes to oligomers at high temperatures or high ionic concentrations. The decrease in size of the multimers is accompanied by an increase in chaperone activity.</text>
</comment>
<comment type="subcellular location">
    <subcellularLocation>
        <location evidence="1">Cytoplasm</location>
    </subcellularLocation>
</comment>
<comment type="domain">
    <text evidence="1">The N- and C-terminal flexible termini are involved in oligomerization and in the binding of non-native substrate proteins, and are essential for chaperone activity.</text>
</comment>
<comment type="similarity">
    <text evidence="1 2">Belongs to the small heat shock protein (HSP20) family.</text>
</comment>
<sequence>MRNHDLSPLLRQWIGFDKLANALQSTAEHQAFPPYNIEKSDDNHYRITLALAGFRQDDLDIQLEGTRLTVKGTPEKPETETKWLHQGLVIQPFSLSFTLADHMEVTGATFTNGLLHIDLTRNVPEALAPQRIAISDRPALNS</sequence>